<sequence>MDEDLVVALRLQEEWDVQMARRAAAAREPVSLVDASWELVDPTPDLQALFLQFNDRFFWGQLEAVEVKWSVRMTLCAGICTYEGRGGMCSIRLSEPLLKLRPRKDLVETLLHEMIHAYLFVTNNDKDREGHGPEFCKHMHRINQLTGANITVYHTFHDEVDEYRRHWWRCNGPCQHRQPYYGYVKRATNRAPSVHDYWWADHQKTCGGTYIKIKEPENYSKKGRGKTKADKQPASAVENKDKLCRGEAQLLIPFSGKGYVLGDASTCPSAGKLNTSYMVNEAKGLSSQDHSVSGLRLNSNAEVKCEQNCLPKKPHLVSPLPTASHQSVLSSYFPRVSVANQKAFRNVNGSPVKNGTTGDGTKRPASGGSQRKVPPSRASLRNTSKVTAPASATVTSAAGTSATISREESGSEDQFLNKRPRLEDRTALDTIKEQTQSGGDLRSSSQPTAASAPQSLSSQRRLVNCPVCQGVVVESQINEHLDRCLEGNKTNLRPRRV</sequence>
<proteinExistence type="evidence at transcript level"/>
<feature type="chain" id="PRO_0000419484" description="DNA-dependent metalloprotease SPRTN">
    <location>
        <begin position="1"/>
        <end position="497"/>
    </location>
</feature>
<feature type="domain" description="SprT-like" evidence="3">
    <location>
        <begin position="46"/>
        <end position="213"/>
    </location>
</feature>
<feature type="zinc finger region" description="UBZ4-type" evidence="4">
    <location>
        <begin position="462"/>
        <end position="489"/>
    </location>
</feature>
<feature type="region of interest" description="Disordered" evidence="6">
    <location>
        <begin position="344"/>
        <end position="459"/>
    </location>
</feature>
<feature type="short sequence motif" description="SHP-box" evidence="2">
    <location>
        <begin position="254"/>
        <end position="262"/>
    </location>
</feature>
<feature type="short sequence motif" description="PIP-box" evidence="2">
    <location>
        <begin position="326"/>
        <end position="333"/>
    </location>
</feature>
<feature type="short sequence motif" description="Nuclear localization signal" evidence="2">
    <location>
        <begin position="413"/>
        <end position="424"/>
    </location>
</feature>
<feature type="compositionally biased region" description="Polar residues" evidence="6">
    <location>
        <begin position="347"/>
        <end position="356"/>
    </location>
</feature>
<feature type="compositionally biased region" description="Low complexity" evidence="6">
    <location>
        <begin position="383"/>
        <end position="404"/>
    </location>
</feature>
<feature type="compositionally biased region" description="Basic and acidic residues" evidence="6">
    <location>
        <begin position="420"/>
        <end position="432"/>
    </location>
</feature>
<feature type="compositionally biased region" description="Low complexity" evidence="6">
    <location>
        <begin position="442"/>
        <end position="459"/>
    </location>
</feature>
<feature type="active site" evidence="2 5">
    <location>
        <position position="113"/>
    </location>
</feature>
<feature type="binding site" evidence="2 5">
    <location>
        <position position="112"/>
    </location>
    <ligand>
        <name>Zn(2+)</name>
        <dbReference type="ChEBI" id="CHEBI:29105"/>
        <label>1</label>
        <note>catalytic</note>
    </ligand>
</feature>
<feature type="binding site" evidence="2 5">
    <location>
        <position position="116"/>
    </location>
    <ligand>
        <name>Zn(2+)</name>
        <dbReference type="ChEBI" id="CHEBI:29105"/>
        <label>1</label>
        <note>catalytic</note>
    </ligand>
</feature>
<feature type="binding site" evidence="2">
    <location>
        <position position="131"/>
    </location>
    <ligand>
        <name>Zn(2+)</name>
        <dbReference type="ChEBI" id="CHEBI:29105"/>
        <label>1</label>
        <note>catalytic</note>
    </ligand>
</feature>
<feature type="binding site" evidence="4">
    <location>
        <position position="465"/>
    </location>
    <ligand>
        <name>Zn(2+)</name>
        <dbReference type="ChEBI" id="CHEBI:29105"/>
        <label>2</label>
    </ligand>
</feature>
<feature type="binding site" evidence="4">
    <location>
        <position position="468"/>
    </location>
    <ligand>
        <name>Zn(2+)</name>
        <dbReference type="ChEBI" id="CHEBI:29105"/>
        <label>2</label>
    </ligand>
</feature>
<feature type="binding site" evidence="4">
    <location>
        <position position="480"/>
    </location>
    <ligand>
        <name>Zn(2+)</name>
        <dbReference type="ChEBI" id="CHEBI:29105"/>
        <label>2</label>
    </ligand>
</feature>
<feature type="binding site" evidence="4">
    <location>
        <position position="484"/>
    </location>
    <ligand>
        <name>Zn(2+)</name>
        <dbReference type="ChEBI" id="CHEBI:29105"/>
        <label>2</label>
    </ligand>
</feature>
<feature type="site" description="Cleavage; by autolysis" evidence="2">
    <location>
        <begin position="228"/>
        <end position="229"/>
    </location>
</feature>
<feature type="modified residue" description="N-acetylmethionine" evidence="2">
    <location>
        <position position="1"/>
    </location>
</feature>
<feature type="modified residue" description="N6-acetyllysine" evidence="2">
    <location>
        <position position="231"/>
    </location>
</feature>
<feature type="modified residue" description="Phosphoserine" evidence="2">
    <location>
        <position position="269"/>
    </location>
</feature>
<feature type="modified residue" description="Phosphoserine" evidence="2">
    <location>
        <position position="384"/>
    </location>
</feature>
<feature type="cross-link" description="Glycyl lysine isopeptide (Lys-Gly) (interchain with G-Cter in SUMO2)" evidence="2">
    <location>
        <position position="304"/>
    </location>
</feature>
<feature type="cross-link" description="Glycyl lysine isopeptide (Lys-Gly) (interchain with G-Cter in SUMO2); alternate" evidence="2">
    <location>
        <position position="342"/>
    </location>
</feature>
<feature type="cross-link" description="Glycyl lysine isopeptide (Lys-Gly) (interchain with G-Cter in ubiquitin); alternate" evidence="2">
    <location>
        <position position="342"/>
    </location>
</feature>
<feature type="cross-link" description="Glycyl lysine isopeptide (Lys-Gly) (interchain with G-Cter in SUMO2)" evidence="2">
    <location>
        <position position="362"/>
    </location>
</feature>
<feature type="cross-link" description="Glycyl lysine isopeptide (Lys-Gly) (interchain with G-Cter in SUMO2)" evidence="2">
    <location>
        <position position="432"/>
    </location>
</feature>
<feature type="sequence conflict" description="In Ref. 3; AAI58089." evidence="10" ref="3">
    <original>D</original>
    <variation>N</variation>
    <location>
        <position position="413"/>
    </location>
</feature>
<feature type="sequence conflict" description="In Ref. 3; AAI58089." evidence="10" ref="3">
    <original>R</original>
    <variation>Q</variation>
    <location>
        <position position="442"/>
    </location>
</feature>
<accession>G3X912</accession>
<accession>B2RY42</accession>
<evidence type="ECO:0000250" key="1">
    <source>
        <dbReference type="UniProtKB" id="A0A1L8G2K9"/>
    </source>
</evidence>
<evidence type="ECO:0000250" key="2">
    <source>
        <dbReference type="UniProtKB" id="Q9H040"/>
    </source>
</evidence>
<evidence type="ECO:0000255" key="3"/>
<evidence type="ECO:0000255" key="4">
    <source>
        <dbReference type="PROSITE-ProRule" id="PRU01256"/>
    </source>
</evidence>
<evidence type="ECO:0000255" key="5">
    <source>
        <dbReference type="PROSITE-ProRule" id="PRU10095"/>
    </source>
</evidence>
<evidence type="ECO:0000256" key="6">
    <source>
        <dbReference type="SAM" id="MobiDB-lite"/>
    </source>
</evidence>
<evidence type="ECO:0000269" key="7">
    <source>
    </source>
</evidence>
<evidence type="ECO:0000269" key="8">
    <source>
    </source>
</evidence>
<evidence type="ECO:0000269" key="9">
    <source>
    </source>
</evidence>
<evidence type="ECO:0000305" key="10"/>
<evidence type="ECO:0000312" key="11">
    <source>
        <dbReference type="MGI" id="MGI:2685351"/>
    </source>
</evidence>
<reference key="1">
    <citation type="journal article" date="2009" name="PLoS Biol.">
        <title>Lineage-specific biology revealed by a finished genome assembly of the mouse.</title>
        <authorList>
            <person name="Church D.M."/>
            <person name="Goodstadt L."/>
            <person name="Hillier L.W."/>
            <person name="Zody M.C."/>
            <person name="Goldstein S."/>
            <person name="She X."/>
            <person name="Bult C.J."/>
            <person name="Agarwala R."/>
            <person name="Cherry J.L."/>
            <person name="DiCuccio M."/>
            <person name="Hlavina W."/>
            <person name="Kapustin Y."/>
            <person name="Meric P."/>
            <person name="Maglott D."/>
            <person name="Birtle Z."/>
            <person name="Marques A.C."/>
            <person name="Graves T."/>
            <person name="Zhou S."/>
            <person name="Teague B."/>
            <person name="Potamousis K."/>
            <person name="Churas C."/>
            <person name="Place M."/>
            <person name="Herschleb J."/>
            <person name="Runnheim R."/>
            <person name="Forrest D."/>
            <person name="Amos-Landgraf J."/>
            <person name="Schwartz D.C."/>
            <person name="Cheng Z."/>
            <person name="Lindblad-Toh K."/>
            <person name="Eichler E.E."/>
            <person name="Ponting C.P."/>
        </authorList>
    </citation>
    <scope>NUCLEOTIDE SEQUENCE [LARGE SCALE GENOMIC DNA]</scope>
    <source>
        <strain>C57BL/6J</strain>
    </source>
</reference>
<reference key="2">
    <citation type="submission" date="2005-07" db="EMBL/GenBank/DDBJ databases">
        <authorList>
            <person name="Mural R.J."/>
            <person name="Adams M.D."/>
            <person name="Myers E.W."/>
            <person name="Smith H.O."/>
            <person name="Venter J.C."/>
        </authorList>
    </citation>
    <scope>NUCLEOTIDE SEQUENCE [LARGE SCALE GENOMIC DNA]</scope>
</reference>
<reference key="3">
    <citation type="journal article" date="2004" name="Genome Res.">
        <title>The status, quality, and expansion of the NIH full-length cDNA project: the Mammalian Gene Collection (MGC).</title>
        <authorList>
            <consortium name="The MGC Project Team"/>
        </authorList>
    </citation>
    <scope>NUCLEOTIDE SEQUENCE [LARGE SCALE MRNA]</scope>
    <source>
        <tissue>Brain</tissue>
    </source>
</reference>
<reference key="4">
    <citation type="journal article" date="2014" name="Nat. Commun.">
        <title>Spartan deficiency causes genomic instability and progeroid phenotypes.</title>
        <authorList>
            <person name="Maskey R.S."/>
            <person name="Kim M.S."/>
            <person name="Baker D.J."/>
            <person name="Childs B."/>
            <person name="Malureanu L.A."/>
            <person name="Jeganathan K.B."/>
            <person name="Machida Y."/>
            <person name="van Deursen J.M."/>
            <person name="Machida Y.J."/>
        </authorList>
    </citation>
    <scope>DISRUPTION PHENOTYPE</scope>
</reference>
<reference key="5">
    <citation type="journal article" date="2017" name="Nucleic Acids Res.">
        <title>Spartan deficiency causes accumulation of Topoisomerase 1 cleavage complexes and tumorigenesis.</title>
        <authorList>
            <person name="Maskey R.S."/>
            <person name="Flatten K.S."/>
            <person name="Sieben C.J."/>
            <person name="Peterson K.L."/>
            <person name="Baker D.J."/>
            <person name="Nam H.J."/>
            <person name="Kim M.S."/>
            <person name="Smyrk T.C."/>
            <person name="Kojima Y."/>
            <person name="Machida Y."/>
            <person name="Santiago A."/>
            <person name="van Deursen J.M."/>
            <person name="Kaufmann S.H."/>
            <person name="Machida Y.J."/>
        </authorList>
    </citation>
    <scope>FUNCTION</scope>
    <scope>DISRUPTION PHENOTYPE</scope>
</reference>
<reference key="6">
    <citation type="journal article" date="2016" name="Mol. Cell">
        <title>Mechanism and regulation of DNA-protein crosslink repair by the DNA-dependent metalloprotease SPRTN.</title>
        <authorList>
            <person name="Stingele J."/>
            <person name="Bellelli R."/>
            <person name="Alte F."/>
            <person name="Hewitt G."/>
            <person name="Sarek G."/>
            <person name="Maslen S.L."/>
            <person name="Tsutakawa S.E."/>
            <person name="Borg A."/>
            <person name="Kjaer S."/>
            <person name="Tainer J.A."/>
            <person name="Skehel J.M."/>
            <person name="Groll M."/>
            <person name="Boulton S.J."/>
        </authorList>
    </citation>
    <scope>FUNCTION</scope>
</reference>
<keyword id="KW-0007">Acetylation</keyword>
<keyword id="KW-0068">Autocatalytic cleavage</keyword>
<keyword id="KW-0158">Chromosome</keyword>
<keyword id="KW-0227">DNA damage</keyword>
<keyword id="KW-0234">DNA repair</keyword>
<keyword id="KW-0378">Hydrolase</keyword>
<keyword id="KW-1017">Isopeptide bond</keyword>
<keyword id="KW-0479">Metal-binding</keyword>
<keyword id="KW-0482">Metalloprotease</keyword>
<keyword id="KW-0539">Nucleus</keyword>
<keyword id="KW-0597">Phosphoprotein</keyword>
<keyword id="KW-0645">Protease</keyword>
<keyword id="KW-1185">Reference proteome</keyword>
<keyword id="KW-0832">Ubl conjugation</keyword>
<keyword id="KW-0862">Zinc</keyword>
<keyword id="KW-0863">Zinc-finger</keyword>
<organism>
    <name type="scientific">Mus musculus</name>
    <name type="common">Mouse</name>
    <dbReference type="NCBI Taxonomy" id="10090"/>
    <lineage>
        <taxon>Eukaryota</taxon>
        <taxon>Metazoa</taxon>
        <taxon>Chordata</taxon>
        <taxon>Craniata</taxon>
        <taxon>Vertebrata</taxon>
        <taxon>Euteleostomi</taxon>
        <taxon>Mammalia</taxon>
        <taxon>Eutheria</taxon>
        <taxon>Euarchontoglires</taxon>
        <taxon>Glires</taxon>
        <taxon>Rodentia</taxon>
        <taxon>Myomorpha</taxon>
        <taxon>Muroidea</taxon>
        <taxon>Muridae</taxon>
        <taxon>Murinae</taxon>
        <taxon>Mus</taxon>
        <taxon>Mus</taxon>
    </lineage>
</organism>
<name>SPRTN_MOUSE</name>
<gene>
    <name evidence="11" type="primary">Sprtn</name>
    <name evidence="11" type="synonym">Gm505</name>
</gene>
<dbReference type="EC" id="3.4.24.-" evidence="2"/>
<dbReference type="EMBL" id="AC139158">
    <property type="status" value="NOT_ANNOTATED_CDS"/>
    <property type="molecule type" value="Genomic_DNA"/>
</dbReference>
<dbReference type="EMBL" id="CH466525">
    <property type="protein sequence ID" value="EDL11789.1"/>
    <property type="molecule type" value="Genomic_DNA"/>
</dbReference>
<dbReference type="EMBL" id="BC158088">
    <property type="protein sequence ID" value="AAI58089.1"/>
    <property type="molecule type" value="mRNA"/>
</dbReference>
<dbReference type="CCDS" id="CCDS52705.1"/>
<dbReference type="RefSeq" id="NP_001104611.1">
    <property type="nucleotide sequence ID" value="NM_001111141.2"/>
</dbReference>
<dbReference type="SMR" id="G3X912"/>
<dbReference type="BioGRID" id="232674">
    <property type="interactions" value="1"/>
</dbReference>
<dbReference type="FunCoup" id="G3X912">
    <property type="interactions" value="3200"/>
</dbReference>
<dbReference type="STRING" id="10090.ENSMUSP00000034467"/>
<dbReference type="GlyGen" id="G3X912">
    <property type="glycosylation" value="1 site"/>
</dbReference>
<dbReference type="iPTMnet" id="G3X912"/>
<dbReference type="PhosphoSitePlus" id="G3X912"/>
<dbReference type="SwissPalm" id="G3X912"/>
<dbReference type="PaxDb" id="10090-ENSMUSP00000034467"/>
<dbReference type="ProteomicsDB" id="257328"/>
<dbReference type="Antibodypedia" id="20798">
    <property type="antibodies" value="127 antibodies from 20 providers"/>
</dbReference>
<dbReference type="Ensembl" id="ENSMUST00000034467.7">
    <property type="protein sequence ID" value="ENSMUSP00000034467.6"/>
    <property type="gene ID" value="ENSMUSG00000031986.7"/>
</dbReference>
<dbReference type="GeneID" id="244666"/>
<dbReference type="KEGG" id="mmu:244666"/>
<dbReference type="UCSC" id="uc009nxx.2">
    <property type="organism name" value="mouse"/>
</dbReference>
<dbReference type="AGR" id="MGI:2685351"/>
<dbReference type="CTD" id="83932"/>
<dbReference type="MGI" id="MGI:2685351">
    <property type="gene designation" value="Sprtn"/>
</dbReference>
<dbReference type="VEuPathDB" id="HostDB:ENSMUSG00000031986"/>
<dbReference type="eggNOG" id="KOG3931">
    <property type="taxonomic scope" value="Eukaryota"/>
</dbReference>
<dbReference type="GeneTree" id="ENSGT00390000003585"/>
<dbReference type="HOGENOM" id="CLU_019426_2_0_1"/>
<dbReference type="InParanoid" id="G3X912"/>
<dbReference type="OMA" id="VCQTEVL"/>
<dbReference type="OrthoDB" id="5236983at2759"/>
<dbReference type="PhylomeDB" id="G3X912"/>
<dbReference type="TreeFam" id="TF314762"/>
<dbReference type="Reactome" id="R-MMU-110320">
    <property type="pathway name" value="Translesion Synthesis by POLH"/>
</dbReference>
<dbReference type="BioGRID-ORCS" id="244666">
    <property type="hits" value="23 hits in 112 CRISPR screens"/>
</dbReference>
<dbReference type="PRO" id="PR:G3X912"/>
<dbReference type="Proteomes" id="UP000000589">
    <property type="component" value="Chromosome 8"/>
</dbReference>
<dbReference type="RNAct" id="G3X912">
    <property type="molecule type" value="protein"/>
</dbReference>
<dbReference type="Bgee" id="ENSMUSG00000031986">
    <property type="expression patterns" value="Expressed in spermatocyte and 213 other cell types or tissues"/>
</dbReference>
<dbReference type="GO" id="GO:0000785">
    <property type="term" value="C:chromatin"/>
    <property type="evidence" value="ECO:0000250"/>
    <property type="project" value="UniProtKB"/>
</dbReference>
<dbReference type="GO" id="GO:0016607">
    <property type="term" value="C:nuclear speck"/>
    <property type="evidence" value="ECO:0007669"/>
    <property type="project" value="Ensembl"/>
</dbReference>
<dbReference type="GO" id="GO:0005634">
    <property type="term" value="C:nucleus"/>
    <property type="evidence" value="ECO:0000250"/>
    <property type="project" value="UniProtKB"/>
</dbReference>
<dbReference type="GO" id="GO:0003690">
    <property type="term" value="F:double-stranded DNA binding"/>
    <property type="evidence" value="ECO:0000250"/>
    <property type="project" value="UniProtKB"/>
</dbReference>
<dbReference type="GO" id="GO:0070530">
    <property type="term" value="F:K63-linked polyubiquitin modification-dependent protein binding"/>
    <property type="evidence" value="ECO:0000250"/>
    <property type="project" value="UniProtKB"/>
</dbReference>
<dbReference type="GO" id="GO:0004222">
    <property type="term" value="F:metalloendopeptidase activity"/>
    <property type="evidence" value="ECO:0000250"/>
    <property type="project" value="UniProtKB"/>
</dbReference>
<dbReference type="GO" id="GO:0003697">
    <property type="term" value="F:single-stranded DNA binding"/>
    <property type="evidence" value="ECO:0000250"/>
    <property type="project" value="UniProtKB"/>
</dbReference>
<dbReference type="GO" id="GO:0043130">
    <property type="term" value="F:ubiquitin binding"/>
    <property type="evidence" value="ECO:0000250"/>
    <property type="project" value="UniProtKB"/>
</dbReference>
<dbReference type="GO" id="GO:0008270">
    <property type="term" value="F:zinc ion binding"/>
    <property type="evidence" value="ECO:0007669"/>
    <property type="project" value="UniProtKB-KW"/>
</dbReference>
<dbReference type="GO" id="GO:0006974">
    <property type="term" value="P:DNA damage response"/>
    <property type="evidence" value="ECO:0000250"/>
    <property type="project" value="UniProtKB"/>
</dbReference>
<dbReference type="GO" id="GO:0036297">
    <property type="term" value="P:interstrand cross-link repair"/>
    <property type="evidence" value="ECO:0007669"/>
    <property type="project" value="Ensembl"/>
</dbReference>
<dbReference type="GO" id="GO:0031398">
    <property type="term" value="P:positive regulation of protein ubiquitination"/>
    <property type="evidence" value="ECO:0000250"/>
    <property type="project" value="UniProtKB"/>
</dbReference>
<dbReference type="GO" id="GO:0016540">
    <property type="term" value="P:protein autoprocessing"/>
    <property type="evidence" value="ECO:0000250"/>
    <property type="project" value="UniProtKB"/>
</dbReference>
<dbReference type="GO" id="GO:0106300">
    <property type="term" value="P:protein-DNA covalent cross-linking repair"/>
    <property type="evidence" value="ECO:0000315"/>
    <property type="project" value="UniProtKB"/>
</dbReference>
<dbReference type="GO" id="GO:0006508">
    <property type="term" value="P:proteolysis"/>
    <property type="evidence" value="ECO:0000250"/>
    <property type="project" value="UniProtKB"/>
</dbReference>
<dbReference type="GO" id="GO:0009411">
    <property type="term" value="P:response to UV"/>
    <property type="evidence" value="ECO:0000250"/>
    <property type="project" value="UniProtKB"/>
</dbReference>
<dbReference type="GO" id="GO:0019985">
    <property type="term" value="P:translesion synthesis"/>
    <property type="evidence" value="ECO:0000250"/>
    <property type="project" value="UniProtKB"/>
</dbReference>
<dbReference type="FunFam" id="3.30.160.60:FF:000331">
    <property type="entry name" value="E3 ubiquitin-protein ligase RAD18"/>
    <property type="match status" value="1"/>
</dbReference>
<dbReference type="Gene3D" id="3.30.160.60">
    <property type="entry name" value="Classic Zinc Finger"/>
    <property type="match status" value="1"/>
</dbReference>
<dbReference type="InterPro" id="IPR006642">
    <property type="entry name" value="Rad18_UBZ4"/>
</dbReference>
<dbReference type="InterPro" id="IPR044245">
    <property type="entry name" value="Spartan"/>
</dbReference>
<dbReference type="InterPro" id="IPR006640">
    <property type="entry name" value="SprT-like_domain"/>
</dbReference>
<dbReference type="InterPro" id="IPR055220">
    <property type="entry name" value="SPRTN_ZBD"/>
</dbReference>
<dbReference type="PANTHER" id="PTHR21220">
    <property type="entry name" value="DNA-DEPENDENT METALLOPROTEASE SPRTN"/>
    <property type="match status" value="1"/>
</dbReference>
<dbReference type="PANTHER" id="PTHR21220:SF0">
    <property type="entry name" value="DNA-DEPENDENT METALLOPROTEASE SPRTN"/>
    <property type="match status" value="1"/>
</dbReference>
<dbReference type="Pfam" id="PF10263">
    <property type="entry name" value="SprT-like"/>
    <property type="match status" value="1"/>
</dbReference>
<dbReference type="Pfam" id="PF22934">
    <property type="entry name" value="SPRTN_ZBD"/>
    <property type="match status" value="1"/>
</dbReference>
<dbReference type="SMART" id="SM00731">
    <property type="entry name" value="SprT"/>
    <property type="match status" value="1"/>
</dbReference>
<dbReference type="SMART" id="SM00734">
    <property type="entry name" value="ZnF_Rad18"/>
    <property type="match status" value="1"/>
</dbReference>
<dbReference type="PROSITE" id="PS51908">
    <property type="entry name" value="ZF_UBZ4"/>
    <property type="match status" value="1"/>
</dbReference>
<dbReference type="PROSITE" id="PS00142">
    <property type="entry name" value="ZINC_PROTEASE"/>
    <property type="match status" value="1"/>
</dbReference>
<comment type="function">
    <text evidence="1 2 8 9">DNA-dependent metalloendopeptidase that mediates the proteolytic cleavage of covalent DNA-protein cross-links (DPCs) during DNA synthesis, thereby playing a key role in maintaining genomic integrity (PubMed:27871365, PubMed:28199696). DPCs are highly toxic DNA lesions that interfere with essential chromatin transactions, such as replication and transcription, and which are induced by reactive agents, such as UV light or formaldehyde (PubMed:27871365, PubMed:28199696). Associates with the DNA replication machinery and specifically removes DPCs during DNA synthesis (By similarity). Catalyzes proteolytic cleavage of the HMCES DNA-protein cross-link following unfolding by the BRIP1/FANCJ helicase (By similarity). Acts as a pleiotropic protease for DNA-binding proteins cross-linked with DNA, such as TOP1, TOP2A, histones H3 and H4 (By similarity). Mediates degradation of DPCs that are not ubiquitinated, while it is not able to degrade ubiquitinated DPCs. SPRTN activation requires polymerase collision with DPCs followed by helicase bypass of DPCs (By similarity). Involved in recruitment of VCP/p97 to sites of DNA damage. Also acts as an activator of CHEK1 during normal DNA replication by mediating proteolytic cleavage of CHEK1, thereby promoting CHEK1 removal from chromatin and subsequent activation. Does not activate CHEK1 in response to DNA damage. May also act as a 'reader' of ubiquitinated PCNA: recruited to sites of UV damage and interacts with ubiquitinated PCNA and RAD18, the E3 ubiquitin ligase that monoubiquitinates PCNA. Facilitates chromatin association of RAD18 and is required for efficient PCNA monoubiquitination, promoting a feed-forward loop to enhance PCNA ubiquitination and translesion DNA synthesis (By similarity).</text>
</comment>
<comment type="cofactor">
    <cofactor evidence="2">
        <name>Zn(2+)</name>
        <dbReference type="ChEBI" id="CHEBI:29105"/>
    </cofactor>
</comment>
<comment type="activity regulation">
    <text evidence="2">DNA-binding activates the protease activity: single-stranded DNA-binding specifically activates ability to cleave covalent DNA-protein cross-links (DPCs). In contrast, double-stranded DNA-binding specifically activates autocatalytic cleavage, and subsequent inactivation.</text>
</comment>
<comment type="subunit">
    <text evidence="2">Homodimer. Interacts (VIA PIP-box) with PCNA (when ubiquitinated). Interacts (via its SHP-box) with VCP/p97. Interacts with RAD18. Interacts with KCTD13 and POLD3.</text>
</comment>
<comment type="subcellular location">
    <subcellularLocation>
        <location evidence="2">Nucleus</location>
    </subcellularLocation>
    <subcellularLocation>
        <location evidence="2">Chromosome</location>
    </subcellularLocation>
    <text evidence="2">Localizes to sites of UV damage via the PIP-box. Recruited to stalled replication forks at sites of replication stress following deubiquitination. CHEK1 stimulates recruitment to chromatin.</text>
</comment>
<comment type="domain">
    <text evidence="2">The PIP-box mediates the interaction with PCNA, while the UBZ4-type zinc finger mediates binding to 'Lys-48'- and 'Lys-63'-linked polyubiquitin.</text>
</comment>
<comment type="PTM">
    <text evidence="2">Autocatalytically cleaved in response to double-stranded DNA-binding: autocatalytic cleavage takes place in trans and leads to inactivation.</text>
</comment>
<comment type="PTM">
    <text evidence="2">Monoubiquitinated; monoubiquitination promotes exclusion from chromatin. Deubiquitinated by VCPIP1: deubiquitination is required for subsequent acetylation and recruitment to chromatin and DNA damage sites.</text>
</comment>
<comment type="PTM">
    <text evidence="2">Acetylated following deubiquitination by VCPIP1, leading to recruitment to chromatin and DNA damage sites.</text>
</comment>
<comment type="PTM">
    <text evidence="2">Phosphorylation by CHEK1 promotes recruitment to chromatin.</text>
</comment>
<comment type="disruption phenotype">
    <text evidence="7 9">Embryonic lethality caused by genomic instability (PubMed:25501849). Cells display impaired lesion bypass, incomplete DNA replication, formation of micronuclei and chromatin bridges and eventually cell death (PubMed:25501849). Cells show an accumulation of DNA-protein cross-links (DPCs) (PubMed:28199696). Sprtn-haploinsufficient mice are viable but show accelerated aging, characterized by cataracts, lordokyphosis and cachexia at a young age (PubMed:25501849).</text>
</comment>
<comment type="similarity">
    <text evidence="10">Belongs to the Spartan family.</text>
</comment>
<protein>
    <recommendedName>
        <fullName evidence="10">DNA-dependent metalloprotease SPRTN</fullName>
        <ecNumber evidence="2">3.4.24.-</ecNumber>
    </recommendedName>
    <alternativeName>
        <fullName evidence="2">Protein with SprT-like domain at the N terminus</fullName>
        <shortName evidence="2">Spartan</shortName>
    </alternativeName>
</protein>